<protein>
    <recommendedName>
        <fullName evidence="1">Transcriptional regulator LsrR</fullName>
    </recommendedName>
</protein>
<dbReference type="EMBL" id="CP000647">
    <property type="protein sequence ID" value="ABR78903.1"/>
    <property type="molecule type" value="Genomic_DNA"/>
</dbReference>
<dbReference type="RefSeq" id="WP_004174223.1">
    <property type="nucleotide sequence ID" value="NC_009648.1"/>
</dbReference>
<dbReference type="SMR" id="A6TEB9"/>
<dbReference type="STRING" id="272620.KPN_03508"/>
<dbReference type="PaxDb" id="272620-KPN_03508"/>
<dbReference type="EnsemblBacteria" id="ABR78903">
    <property type="protein sequence ID" value="ABR78903"/>
    <property type="gene ID" value="KPN_03508"/>
</dbReference>
<dbReference type="GeneID" id="93271188"/>
<dbReference type="KEGG" id="kpn:KPN_03508"/>
<dbReference type="HOGENOM" id="CLU_054506_0_1_6"/>
<dbReference type="Proteomes" id="UP000000265">
    <property type="component" value="Chromosome"/>
</dbReference>
<dbReference type="GO" id="GO:0005737">
    <property type="term" value="C:cytoplasm"/>
    <property type="evidence" value="ECO:0007669"/>
    <property type="project" value="UniProtKB-SubCell"/>
</dbReference>
<dbReference type="GO" id="GO:0030246">
    <property type="term" value="F:carbohydrate binding"/>
    <property type="evidence" value="ECO:0007669"/>
    <property type="project" value="InterPro"/>
</dbReference>
<dbReference type="GO" id="GO:0003677">
    <property type="term" value="F:DNA binding"/>
    <property type="evidence" value="ECO:0007669"/>
    <property type="project" value="UniProtKB-KW"/>
</dbReference>
<dbReference type="Gene3D" id="3.40.50.1360">
    <property type="match status" value="1"/>
</dbReference>
<dbReference type="Gene3D" id="1.10.10.10">
    <property type="entry name" value="Winged helix-like DNA-binding domain superfamily/Winged helix DNA-binding domain"/>
    <property type="match status" value="1"/>
</dbReference>
<dbReference type="InterPro" id="IPR037171">
    <property type="entry name" value="NagB/RpiA_transferase-like"/>
</dbReference>
<dbReference type="InterPro" id="IPR051054">
    <property type="entry name" value="SorC_transcr_regulators"/>
</dbReference>
<dbReference type="InterPro" id="IPR007324">
    <property type="entry name" value="Sugar-bd_dom_put"/>
</dbReference>
<dbReference type="InterPro" id="IPR036388">
    <property type="entry name" value="WH-like_DNA-bd_sf"/>
</dbReference>
<dbReference type="NCBIfam" id="NF011947">
    <property type="entry name" value="PRK15418.1"/>
    <property type="match status" value="1"/>
</dbReference>
<dbReference type="PANTHER" id="PTHR34294:SF1">
    <property type="entry name" value="TRANSCRIPTIONAL REGULATOR LSRR"/>
    <property type="match status" value="1"/>
</dbReference>
<dbReference type="PANTHER" id="PTHR34294">
    <property type="entry name" value="TRANSCRIPTIONAL REGULATOR-RELATED"/>
    <property type="match status" value="1"/>
</dbReference>
<dbReference type="Pfam" id="PF04198">
    <property type="entry name" value="Sugar-bind"/>
    <property type="match status" value="1"/>
</dbReference>
<dbReference type="SUPFAM" id="SSF100950">
    <property type="entry name" value="NagB/RpiA/CoA transferase-like"/>
    <property type="match status" value="1"/>
</dbReference>
<accession>A6TEB9</accession>
<name>LSRR_KLEP7</name>
<sequence length="323" mass="34452">MSEKRITEENRYAGLALAEEELVARVAWCYYHDGLTQNDIGERLGLPRLKISRLLEKGRQSGVIRVQINSRYEGCLALESELQQRFGLKIARVLPALNTPPMNTRLGIGAAQSLMGILQPGQLLAVGFGEATMSCLQHLSGFIGSQQVRLVTLSGGVGPYMTGIGQLDAACSVSIIPAPLRVSSAEVAEILRRESSVRDVMLAATAADAAVVGIGAIDQRRDATILRSGYISEGEQLMYARKGAVGDILGYFLQADGRPVEGLEIHRELLGVTLDELAQLPTIVGVAGGEQKAQAIHAALIGKRINGLVTEETTARAVLALAS</sequence>
<reference key="1">
    <citation type="submission" date="2006-09" db="EMBL/GenBank/DDBJ databases">
        <authorList>
            <consortium name="The Klebsiella pneumonia Genome Sequencing Project"/>
            <person name="McClelland M."/>
            <person name="Sanderson E.K."/>
            <person name="Spieth J."/>
            <person name="Clifton W.S."/>
            <person name="Latreille P."/>
            <person name="Sabo A."/>
            <person name="Pepin K."/>
            <person name="Bhonagiri V."/>
            <person name="Porwollik S."/>
            <person name="Ali J."/>
            <person name="Wilson R.K."/>
        </authorList>
    </citation>
    <scope>NUCLEOTIDE SEQUENCE [LARGE SCALE GENOMIC DNA]</scope>
    <source>
        <strain>ATCC 700721 / MGH 78578</strain>
    </source>
</reference>
<proteinExistence type="inferred from homology"/>
<gene>
    <name type="primary">lsrR</name>
    <name type="ordered locus">KPN78578_34790</name>
    <name type="ORF">KPN_03508</name>
</gene>
<comment type="function">
    <text evidence="1">Transcriptional regulator that represses the expression of the lsr operon in the absence of the quorum-sensing signaling molecule autoinducer 2 (AI-2) (By similarity). It also represses the expression of the lsrRK operon (By similarity). Acts by binding to the intergenic region between the lsr operon and lsrR (By similarity). In the presence of phosphorylated autoinducer-2 (phospho-AI-2), LsrR is inactivated, leading to the transcription of the genes (By similarity).</text>
</comment>
<comment type="activity regulation">
    <text evidence="1">Inactivated by phosphorylated autoinducer-2 (phospho-AI-2) (By similarity). Phospho-AI-2 acts by binding to LsrR, which is then unable to bind to the promoter regions, allowing the transcription of the target genes (By similarity).</text>
</comment>
<comment type="subcellular location">
    <subcellularLocation>
        <location evidence="2">Cytoplasm</location>
    </subcellularLocation>
</comment>
<comment type="similarity">
    <text evidence="2">Belongs to the SorC transcriptional regulatory family.</text>
</comment>
<organism>
    <name type="scientific">Klebsiella pneumoniae subsp. pneumoniae (strain ATCC 700721 / MGH 78578)</name>
    <dbReference type="NCBI Taxonomy" id="272620"/>
    <lineage>
        <taxon>Bacteria</taxon>
        <taxon>Pseudomonadati</taxon>
        <taxon>Pseudomonadota</taxon>
        <taxon>Gammaproteobacteria</taxon>
        <taxon>Enterobacterales</taxon>
        <taxon>Enterobacteriaceae</taxon>
        <taxon>Klebsiella/Raoultella group</taxon>
        <taxon>Klebsiella</taxon>
        <taxon>Klebsiella pneumoniae complex</taxon>
    </lineage>
</organism>
<feature type="chain" id="PRO_0000351617" description="Transcriptional regulator LsrR">
    <location>
        <begin position="1"/>
        <end position="323"/>
    </location>
</feature>
<feature type="DNA-binding region" description="H-T-H motif" evidence="2">
    <location>
        <begin position="37"/>
        <end position="60"/>
    </location>
</feature>
<evidence type="ECO:0000250" key="1">
    <source>
        <dbReference type="UniProtKB" id="Q8ZKQ5"/>
    </source>
</evidence>
<evidence type="ECO:0000305" key="2"/>
<keyword id="KW-0963">Cytoplasm</keyword>
<keyword id="KW-0238">DNA-binding</keyword>
<keyword id="KW-0678">Repressor</keyword>
<keyword id="KW-0804">Transcription</keyword>
<keyword id="KW-0805">Transcription regulation</keyword>